<name>ITAM_MOUSE</name>
<comment type="function">
    <text evidence="3 7 9 11 12">Integrin ITGAM/ITGB2 is implicated in various adhesive interactions of monocytes, macrophages and granulocytes as well as in mediating the uptake of complement-coated particles and pathogens (By similarity). It is identical with CR-3, the receptor for the iC3b fragment of the third complement component. It probably recognizes the R-G-D peptide in C3b. Integrin ITGAM/ITGB2 is also a receptor for fibrinogen, factor X and ICAM1. It recognizes P1 and P2 peptides of fibrinogen gamma chain. Regulates neutrophil migration. In association with beta subunit ITGB2/CD18, required for CD177-PRTN3-mediated activation of TNF primed neutrophils (By similarity). May regulate phagocytosis-induced apoptosis in extravasated neutrophils (By similarity). May play a role in mast cell development (By similarity). Required with TYROBP/DAP12 in microglia to control production of microglial superoxide ions which promote the neuronal apoptosis that occurs during brain development (PubMed:18685038).</text>
</comment>
<comment type="subunit">
    <text evidence="3">Heterodimer of an alpha and a beta subunit. ITGAM associates with ITGB2. Found in a complex with CD177 and ITGB2/CD18. Interacts with JAM3. Interacts with THBD. Interacts with complement factor H/CFH; this interaction mediates adhesion of neutrophils to pathogens leading to pathogen clearance (By similarity). Interacts with TMEM268; this interaction inhibits ITGAM degradation via the endosome-lysosome pathway (By similarity).</text>
</comment>
<comment type="subcellular location">
    <subcellularLocation>
        <location evidence="9 12">Cell membrane</location>
        <topology evidence="3">Single-pass type I membrane protein</topology>
    </subcellularLocation>
    <subcellularLocation>
        <location evidence="3">Membrane raft</location>
        <topology evidence="3">Single-pass type I membrane protein</topology>
    </subcellularLocation>
</comment>
<comment type="alternative products">
    <event type="alternative splicing"/>
    <isoform>
        <id>P05555-1</id>
        <name>1</name>
        <sequence type="displayed"/>
    </isoform>
    <isoform>
        <id>P05555-2</id>
        <name>2</name>
        <sequence type="described" ref="VSP_010473"/>
    </isoform>
</comment>
<comment type="tissue specificity">
    <text evidence="7 8 9 12">Predominantly expressed in monocytes and granulocytes (PubMed:3887182, PubMed:8986723). Expressed in a subset of peritoneal mast cells (PubMed:9862668). Expressed in microglia (at protein level) (PubMed:18685038).</text>
</comment>
<comment type="induction">
    <text evidence="12">Induced by lipopolysaccharide (LPS) in mast cells.</text>
</comment>
<comment type="domain">
    <text>The integrin I-domain (insert) is a VWFA domain. Integrins with I-domains do not undergo protease cleavage.</text>
</comment>
<comment type="disruption phenotype">
    <text evidence="7 9 10 11 12">Mice are born at the expected Mendelian rate (PubMed:8986723). The numbers of blood leukocytes are normal and neutrophils rolling on blood vessels is not affected (PubMed:8986723). Impaired LTB4-induced neutrophil adhesion to venules (PubMed:8986723). Numbers of mast cells in the peritoneal cavity, peritoneal wall and in the dorsal skin are reduced (PubMed:9862668). In an experimental model of thioglycolate-induced peritonitis, abnormal accumulation of recruited neutrophils due to impaired apoptosis (PubMed:8986723). In an experimental model of acute septic peritonitis, 5-fold increase in mortality rate, reduced neutrophil recruitment in the peritoneum, reduced histamine production and impaired bacterial clearence (PubMed:9862668). In experimental model of immune complex-mediated glomerulonephritis, reduced neutrophil accumulation without affecting their initial recruitment and reduced proteinuria (PubMed:9382884). Enhanced susceptibility to high fat diet-induced obesity characterized by a weight increase and higher levels of white and brown fat (PubMed:9207125). Reduced apoptosis in the hippocampus in neonates (PubMed:18685038).</text>
</comment>
<comment type="similarity">
    <text evidence="14">Belongs to the integrin alpha chain family.</text>
</comment>
<organism>
    <name type="scientific">Mus musculus</name>
    <name type="common">Mouse</name>
    <dbReference type="NCBI Taxonomy" id="10090"/>
    <lineage>
        <taxon>Eukaryota</taxon>
        <taxon>Metazoa</taxon>
        <taxon>Chordata</taxon>
        <taxon>Craniata</taxon>
        <taxon>Vertebrata</taxon>
        <taxon>Euteleostomi</taxon>
        <taxon>Mammalia</taxon>
        <taxon>Eutheria</taxon>
        <taxon>Euarchontoglires</taxon>
        <taxon>Glires</taxon>
        <taxon>Rodentia</taxon>
        <taxon>Myomorpha</taxon>
        <taxon>Muroidea</taxon>
        <taxon>Muridae</taxon>
        <taxon>Murinae</taxon>
        <taxon>Mus</taxon>
        <taxon>Mus</taxon>
    </lineage>
</organism>
<sequence>MTLKALLVTALALCHGFNLDTEHPMTFQENAKGFGQNVVQLGGTSVVVAAPQEAKAVNQTGALYQCDYSTSRCHPIPLQVPPEAVNMSLGLSLAVSTVPQQLLACGPTVHQNCKENTYVNGLCYLFGSNLLRPPQQFPEALRECPQQESDIVFLIDGSGSINNIDFQKMKEFVSTVMEQFKKSKTLFSLMQYSDEFRIHFTFNDFKRNPSPRSHVSPIKQLNGRTKTASGIRKVVRELFHKTNGARENAAKILVVITDGEKFGDPLDYKDVIPEADRAGVIRYVIGVGNAFNKPQSRRELDTIASKPAGEHVFQVDNFEALNTIQNQLQEKIFAIEGTQTGSTSSFEHEMSQEGFSASITSNGPLLGSVGSFDWAGGAFLYTSKDKVTFINTTRVDSDMNDAYLGYASAVILRNRVQSLVLGAPRYQHIGLVVMFRENFGTWEPHTSIKGSQIGSYFGASLCSVDMDADGNTNLILIGAPHYYEKTRGGQVSVCPLPRGRARWQCEALLHGDQGHPWGRFGAALTVLGDVNGDKLTDVAIGAPGEQENQGAVYIFYGASIASLSASHSHRIIGAHFSPGLQYFGQSLSGGKDLTMDGLMDLAVGAQGHLLLLRAQPVLRLEATMEFSPKKVARSVFACQEQVLKNKDAGEVRVCLRVRKNTKDRLREGDIQSTVTYDLALDPVRSRIRAFFDETKNNTRRRTQVFGLMQKCETLKLILPDCVDDSVSPIILRLNYTLVGEPLRSFGNLRPVLAMDAQRFFTAMFPFEKNCGNDSICQDDLSITMSAMGLDTLVVGGPQDFNMSVTLRNDGEDSYGTQVTVYYPSGLSYRKDSASQNPLTKKPWFVKPAESSSSSEGHGALKSTTWNINHPIFPANSEVTFNVTFDVDSHASFGNKLLLKAIVASENNMSRTHKTKFQLELPVKYAIYMIVTSDESSIRYLNFTASEMTSKVIQHQYQFNNLGQRSLPVSVVFWIPVQINNVTVWDHPQVIFSQNLSSACHTEQKSPPHSNFRDQLERTPVLNCSVAVCKRIQCDLPSFNTQEIFNVTLKGNLSFDWYIKTSHGHLLLVSSTEILFNDSAFALLPGQESYVRSKTETKVEPYEVHNPVPLIVGSSIGGLVLLALITAGLYKLGFFKRQYKDMMNEAAPQDAPPQ</sequence>
<dbReference type="EMBL" id="X07640">
    <property type="protein sequence ID" value="CAA30479.1"/>
    <property type="molecule type" value="mRNA"/>
</dbReference>
<dbReference type="EMBL" id="AK039444">
    <property type="protein sequence ID" value="BAC30350.1"/>
    <property type="molecule type" value="mRNA"/>
</dbReference>
<dbReference type="EMBL" id="M14293">
    <property type="protein sequence ID" value="AAA39484.1"/>
    <property type="molecule type" value="Genomic_DNA"/>
</dbReference>
<dbReference type="CCDS" id="CCDS21889.1">
    <molecule id="P05555-1"/>
</dbReference>
<dbReference type="PIR" id="S00551">
    <property type="entry name" value="S00551"/>
</dbReference>
<dbReference type="PDB" id="6RHV">
    <property type="method" value="X-ray"/>
    <property type="resolution" value="2.29 A"/>
    <property type="chains" value="C=143-337"/>
</dbReference>
<dbReference type="PDBsum" id="6RHV"/>
<dbReference type="SMR" id="P05555"/>
<dbReference type="ComplexPortal" id="CPX-3129">
    <property type="entry name" value="Integrin alphaM-beta2 complex"/>
</dbReference>
<dbReference type="FunCoup" id="P05555">
    <property type="interactions" value="222"/>
</dbReference>
<dbReference type="IntAct" id="P05555">
    <property type="interactions" value="1"/>
</dbReference>
<dbReference type="STRING" id="10090.ENSMUSP00000068468"/>
<dbReference type="ChEMBL" id="CHEMBL3603"/>
<dbReference type="GlyConnect" id="2401">
    <property type="glycosylation" value="3 N-Linked glycans (3 sites)"/>
</dbReference>
<dbReference type="GlyCosmos" id="P05555">
    <property type="glycosylation" value="16 sites, 3 glycans"/>
</dbReference>
<dbReference type="GlyGen" id="P05555">
    <property type="glycosylation" value="16 sites, 6 N-linked glycans (8 sites)"/>
</dbReference>
<dbReference type="iPTMnet" id="P05555"/>
<dbReference type="PhosphoSitePlus" id="P05555"/>
<dbReference type="jPOST" id="P05555"/>
<dbReference type="PaxDb" id="10090-ENSMUSP00000068468"/>
<dbReference type="PeptideAtlas" id="P05555"/>
<dbReference type="ProteomicsDB" id="268894">
    <molecule id="P05555-1"/>
</dbReference>
<dbReference type="ProteomicsDB" id="268895">
    <molecule id="P05555-2"/>
</dbReference>
<dbReference type="ABCD" id="P05555">
    <property type="antibodies" value="8 sequenced antibodies"/>
</dbReference>
<dbReference type="AGR" id="MGI:96607"/>
<dbReference type="MGI" id="MGI:96607">
    <property type="gene designation" value="Itgam"/>
</dbReference>
<dbReference type="eggNOG" id="KOG3637">
    <property type="taxonomic scope" value="Eukaryota"/>
</dbReference>
<dbReference type="InParanoid" id="P05555"/>
<dbReference type="PhylomeDB" id="P05555"/>
<dbReference type="Reactome" id="R-MMU-166016">
    <property type="pathway name" value="Toll Like Receptor 4 (TLR4) Cascade"/>
</dbReference>
<dbReference type="Reactome" id="R-MMU-202733">
    <property type="pathway name" value="Cell surface interactions at the vascular wall"/>
</dbReference>
<dbReference type="Reactome" id="R-MMU-216083">
    <property type="pathway name" value="Integrin cell surface interactions"/>
</dbReference>
<dbReference type="Reactome" id="R-MMU-6798695">
    <property type="pathway name" value="Neutrophil degranulation"/>
</dbReference>
<dbReference type="ChiTaRS" id="Itgam">
    <property type="organism name" value="mouse"/>
</dbReference>
<dbReference type="PRO" id="PR:P05555"/>
<dbReference type="Proteomes" id="UP000000589">
    <property type="component" value="Unplaced"/>
</dbReference>
<dbReference type="RNAct" id="P05555">
    <property type="molecule type" value="protein"/>
</dbReference>
<dbReference type="GO" id="GO:0009986">
    <property type="term" value="C:cell surface"/>
    <property type="evidence" value="ECO:0000314"/>
    <property type="project" value="MGI"/>
</dbReference>
<dbReference type="GO" id="GO:0009897">
    <property type="term" value="C:external side of plasma membrane"/>
    <property type="evidence" value="ECO:0000314"/>
    <property type="project" value="MGI"/>
</dbReference>
<dbReference type="GO" id="GO:0034688">
    <property type="term" value="C:integrin alphaM-beta2 complex"/>
    <property type="evidence" value="ECO:0000315"/>
    <property type="project" value="ARUK-UCL"/>
</dbReference>
<dbReference type="GO" id="GO:0016020">
    <property type="term" value="C:membrane"/>
    <property type="evidence" value="ECO:0000314"/>
    <property type="project" value="MGI"/>
</dbReference>
<dbReference type="GO" id="GO:0045121">
    <property type="term" value="C:membrane raft"/>
    <property type="evidence" value="ECO:0007669"/>
    <property type="project" value="UniProtKB-SubCell"/>
</dbReference>
<dbReference type="GO" id="GO:0005634">
    <property type="term" value="C:nucleus"/>
    <property type="evidence" value="ECO:0000314"/>
    <property type="project" value="MGI"/>
</dbReference>
<dbReference type="GO" id="GO:0005886">
    <property type="term" value="C:plasma membrane"/>
    <property type="evidence" value="ECO:0000314"/>
    <property type="project" value="UniProtKB"/>
</dbReference>
<dbReference type="GO" id="GO:0038024">
    <property type="term" value="F:cargo receptor activity"/>
    <property type="evidence" value="ECO:0000316"/>
    <property type="project" value="ARUK-UCL"/>
</dbReference>
<dbReference type="GO" id="GO:0001851">
    <property type="term" value="F:complement component C3b binding"/>
    <property type="evidence" value="ECO:0000316"/>
    <property type="project" value="ARUK-UCL"/>
</dbReference>
<dbReference type="GO" id="GO:0043395">
    <property type="term" value="F:heparan sulfate proteoglycan binding"/>
    <property type="evidence" value="ECO:0000314"/>
    <property type="project" value="MGI"/>
</dbReference>
<dbReference type="GO" id="GO:0008201">
    <property type="term" value="F:heparin binding"/>
    <property type="evidence" value="ECO:0000314"/>
    <property type="project" value="MGI"/>
</dbReference>
<dbReference type="GO" id="GO:0046872">
    <property type="term" value="F:metal ion binding"/>
    <property type="evidence" value="ECO:0007669"/>
    <property type="project" value="UniProtKB-KW"/>
</dbReference>
<dbReference type="GO" id="GO:0001846">
    <property type="term" value="F:opsonin binding"/>
    <property type="evidence" value="ECO:0000314"/>
    <property type="project" value="MGI"/>
</dbReference>
<dbReference type="GO" id="GO:0050798">
    <property type="term" value="P:activated T cell proliferation"/>
    <property type="evidence" value="ECO:0000315"/>
    <property type="project" value="MGI"/>
</dbReference>
<dbReference type="GO" id="GO:0097242">
    <property type="term" value="P:amyloid-beta clearance"/>
    <property type="evidence" value="ECO:0000315"/>
    <property type="project" value="ARUK-UCL"/>
</dbReference>
<dbReference type="GO" id="GO:0007155">
    <property type="term" value="P:cell adhesion"/>
    <property type="evidence" value="ECO:0000315"/>
    <property type="project" value="MGI"/>
</dbReference>
<dbReference type="GO" id="GO:0098609">
    <property type="term" value="P:cell-cell adhesion"/>
    <property type="evidence" value="ECO:0000316"/>
    <property type="project" value="MGI"/>
</dbReference>
<dbReference type="GO" id="GO:0045123">
    <property type="term" value="P:cellular extravasation"/>
    <property type="evidence" value="ECO:0000315"/>
    <property type="project" value="MGI"/>
</dbReference>
<dbReference type="GO" id="GO:0002430">
    <property type="term" value="P:complement receptor mediated signaling pathway"/>
    <property type="evidence" value="ECO:0000315"/>
    <property type="project" value="ARUK-UCL"/>
</dbReference>
<dbReference type="GO" id="GO:0150062">
    <property type="term" value="P:complement-mediated synapse pruning"/>
    <property type="evidence" value="ECO:0000315"/>
    <property type="project" value="ARUK-UCL"/>
</dbReference>
<dbReference type="GO" id="GO:0030900">
    <property type="term" value="P:forebrain development"/>
    <property type="evidence" value="ECO:0000314"/>
    <property type="project" value="ARUK-UCL"/>
</dbReference>
<dbReference type="GO" id="GO:0007229">
    <property type="term" value="P:integrin-mediated signaling pathway"/>
    <property type="evidence" value="ECO:0007669"/>
    <property type="project" value="UniProtKB-KW"/>
</dbReference>
<dbReference type="GO" id="GO:0061756">
    <property type="term" value="P:leukocyte adhesion to vascular endothelial cell"/>
    <property type="evidence" value="ECO:0000315"/>
    <property type="project" value="UniProtKB"/>
</dbReference>
<dbReference type="GO" id="GO:0007159">
    <property type="term" value="P:leukocyte cell-cell adhesion"/>
    <property type="evidence" value="ECO:0000315"/>
    <property type="project" value="MGI"/>
</dbReference>
<dbReference type="GO" id="GO:0002523">
    <property type="term" value="P:leukocyte migration involved in inflammatory response"/>
    <property type="evidence" value="ECO:0000315"/>
    <property type="project" value="MGI"/>
</dbReference>
<dbReference type="GO" id="GO:0014005">
    <property type="term" value="P:microglia development"/>
    <property type="evidence" value="ECO:0000314"/>
    <property type="project" value="MGI"/>
</dbReference>
<dbReference type="GO" id="GO:0001774">
    <property type="term" value="P:microglial cell activation"/>
    <property type="evidence" value="ECO:0000315"/>
    <property type="project" value="ARUK-UCL"/>
</dbReference>
<dbReference type="GO" id="GO:0045963">
    <property type="term" value="P:negative regulation of dopamine metabolic process"/>
    <property type="evidence" value="ECO:0000314"/>
    <property type="project" value="ARUK-UCL"/>
</dbReference>
<dbReference type="GO" id="GO:0001781">
    <property type="term" value="P:neutrophil apoptotic process"/>
    <property type="evidence" value="ECO:0000315"/>
    <property type="project" value="UniProtKB"/>
</dbReference>
<dbReference type="GO" id="GO:0030593">
    <property type="term" value="P:neutrophil chemotaxis"/>
    <property type="evidence" value="ECO:0000315"/>
    <property type="project" value="MGI"/>
</dbReference>
<dbReference type="GO" id="GO:0006909">
    <property type="term" value="P:phagocytosis"/>
    <property type="evidence" value="ECO:0000315"/>
    <property type="project" value="UniProtKB"/>
</dbReference>
<dbReference type="GO" id="GO:0006911">
    <property type="term" value="P:phagocytosis, engulfment"/>
    <property type="evidence" value="ECO:0000315"/>
    <property type="project" value="ARUK-UCL"/>
</dbReference>
<dbReference type="GO" id="GO:0060376">
    <property type="term" value="P:positive regulation of mast cell differentiation"/>
    <property type="evidence" value="ECO:0000315"/>
    <property type="project" value="UniProtKB"/>
</dbReference>
<dbReference type="GO" id="GO:1904151">
    <property type="term" value="P:positive regulation of microglial cell mediated cytotoxicity"/>
    <property type="evidence" value="ECO:0000315"/>
    <property type="project" value="UniProtKB"/>
</dbReference>
<dbReference type="GO" id="GO:0090314">
    <property type="term" value="P:positive regulation of protein targeting to membrane"/>
    <property type="evidence" value="ECO:0000315"/>
    <property type="project" value="ARUK-UCL"/>
</dbReference>
<dbReference type="GO" id="GO:0032930">
    <property type="term" value="P:positive regulation of superoxide anion generation"/>
    <property type="evidence" value="ECO:0000314"/>
    <property type="project" value="ARUK-UCL"/>
</dbReference>
<dbReference type="GO" id="GO:0006898">
    <property type="term" value="P:receptor-mediated endocytosis"/>
    <property type="evidence" value="ECO:0000315"/>
    <property type="project" value="ARUK-UCL"/>
</dbReference>
<dbReference type="GO" id="GO:0150064">
    <property type="term" value="P:vertebrate eye-specific patterning"/>
    <property type="evidence" value="ECO:0000315"/>
    <property type="project" value="ARUK-UCL"/>
</dbReference>
<dbReference type="CDD" id="cd01469">
    <property type="entry name" value="vWA_integrins_alpha_subunit"/>
    <property type="match status" value="1"/>
</dbReference>
<dbReference type="FunFam" id="2.130.10.130:FF:000005">
    <property type="entry name" value="Integrin alpha L"/>
    <property type="match status" value="1"/>
</dbReference>
<dbReference type="FunFam" id="2.60.40.1510:FF:000009">
    <property type="entry name" value="Integrin alpha M"/>
    <property type="match status" value="1"/>
</dbReference>
<dbReference type="FunFam" id="3.40.50.410:FF:000067">
    <property type="entry name" value="Integrin alpha M"/>
    <property type="match status" value="1"/>
</dbReference>
<dbReference type="FunFam" id="1.20.5.930:FF:000004">
    <property type="entry name" value="Integrin subunit alpha M"/>
    <property type="match status" value="1"/>
</dbReference>
<dbReference type="FunFam" id="2.60.40.1460:FF:000001">
    <property type="entry name" value="Integrin, alpha V"/>
    <property type="match status" value="1"/>
</dbReference>
<dbReference type="Gene3D" id="1.20.5.930">
    <property type="entry name" value="Bicelle-embedded integrin alpha(iib) transmembrane segment"/>
    <property type="match status" value="1"/>
</dbReference>
<dbReference type="Gene3D" id="2.130.10.130">
    <property type="entry name" value="Integrin alpha, N-terminal"/>
    <property type="match status" value="1"/>
</dbReference>
<dbReference type="Gene3D" id="2.60.40.1460">
    <property type="entry name" value="Integrin domains. Chain A, domain 2"/>
    <property type="match status" value="1"/>
</dbReference>
<dbReference type="Gene3D" id="2.60.40.1510">
    <property type="entry name" value="ntegrin, alpha v. Chain A, domain 3"/>
    <property type="match status" value="1"/>
</dbReference>
<dbReference type="Gene3D" id="2.60.40.1530">
    <property type="entry name" value="ntegrin, alpha v. Chain A, domain 4"/>
    <property type="match status" value="1"/>
</dbReference>
<dbReference type="Gene3D" id="3.40.50.410">
    <property type="entry name" value="von Willebrand factor, type A domain"/>
    <property type="match status" value="1"/>
</dbReference>
<dbReference type="InterPro" id="IPR013517">
    <property type="entry name" value="FG-GAP"/>
</dbReference>
<dbReference type="InterPro" id="IPR013519">
    <property type="entry name" value="Int_alpha_beta-p"/>
</dbReference>
<dbReference type="InterPro" id="IPR000413">
    <property type="entry name" value="Integrin_alpha"/>
</dbReference>
<dbReference type="InterPro" id="IPR018184">
    <property type="entry name" value="Integrin_alpha_C_CS"/>
</dbReference>
<dbReference type="InterPro" id="IPR013649">
    <property type="entry name" value="Integrin_alpha_Ig-like_1"/>
</dbReference>
<dbReference type="InterPro" id="IPR048285">
    <property type="entry name" value="Integrin_alpha_Ig-like_2"/>
</dbReference>
<dbReference type="InterPro" id="IPR028994">
    <property type="entry name" value="Integrin_alpha_N"/>
</dbReference>
<dbReference type="InterPro" id="IPR032695">
    <property type="entry name" value="Integrin_dom_sf"/>
</dbReference>
<dbReference type="InterPro" id="IPR048633">
    <property type="entry name" value="ITGAX-like_Ig_3"/>
</dbReference>
<dbReference type="InterPro" id="IPR002035">
    <property type="entry name" value="VWF_A"/>
</dbReference>
<dbReference type="InterPro" id="IPR036465">
    <property type="entry name" value="vWFA_dom_sf"/>
</dbReference>
<dbReference type="PANTHER" id="PTHR23220">
    <property type="entry name" value="INTEGRIN ALPHA"/>
    <property type="match status" value="1"/>
</dbReference>
<dbReference type="PANTHER" id="PTHR23220:SF130">
    <property type="entry name" value="INTEGRIN ALPHA-M"/>
    <property type="match status" value="1"/>
</dbReference>
<dbReference type="Pfam" id="PF01839">
    <property type="entry name" value="FG-GAP"/>
    <property type="match status" value="1"/>
</dbReference>
<dbReference type="Pfam" id="PF08441">
    <property type="entry name" value="Integrin_A_Ig_1"/>
    <property type="match status" value="1"/>
</dbReference>
<dbReference type="Pfam" id="PF20805">
    <property type="entry name" value="Integrin_A_Ig_2"/>
    <property type="match status" value="1"/>
</dbReference>
<dbReference type="Pfam" id="PF00357">
    <property type="entry name" value="Integrin_alpha"/>
    <property type="match status" value="1"/>
</dbReference>
<dbReference type="Pfam" id="PF21520">
    <property type="entry name" value="ITGAX-like_Ig_3"/>
    <property type="match status" value="1"/>
</dbReference>
<dbReference type="Pfam" id="PF00092">
    <property type="entry name" value="VWA"/>
    <property type="match status" value="1"/>
</dbReference>
<dbReference type="PRINTS" id="PR01185">
    <property type="entry name" value="INTEGRINA"/>
</dbReference>
<dbReference type="PRINTS" id="PR00453">
    <property type="entry name" value="VWFADOMAIN"/>
</dbReference>
<dbReference type="SMART" id="SM00191">
    <property type="entry name" value="Int_alpha"/>
    <property type="match status" value="5"/>
</dbReference>
<dbReference type="SMART" id="SM00327">
    <property type="entry name" value="VWA"/>
    <property type="match status" value="1"/>
</dbReference>
<dbReference type="SUPFAM" id="SSF69318">
    <property type="entry name" value="Integrin alpha N-terminal domain"/>
    <property type="match status" value="1"/>
</dbReference>
<dbReference type="SUPFAM" id="SSF69179">
    <property type="entry name" value="Integrin domains"/>
    <property type="match status" value="3"/>
</dbReference>
<dbReference type="SUPFAM" id="SSF53300">
    <property type="entry name" value="vWA-like"/>
    <property type="match status" value="1"/>
</dbReference>
<dbReference type="PROSITE" id="PS51470">
    <property type="entry name" value="FG_GAP"/>
    <property type="match status" value="7"/>
</dbReference>
<dbReference type="PROSITE" id="PS00242">
    <property type="entry name" value="INTEGRIN_ALPHA"/>
    <property type="match status" value="1"/>
</dbReference>
<dbReference type="PROSITE" id="PS50234">
    <property type="entry name" value="VWFA"/>
    <property type="match status" value="1"/>
</dbReference>
<protein>
    <recommendedName>
        <fullName>Integrin alpha-M</fullName>
    </recommendedName>
    <alternativeName>
        <fullName>CD11 antigen-like family member B</fullName>
    </alternativeName>
    <alternativeName>
        <fullName>CR-3 alpha chain</fullName>
    </alternativeName>
    <alternativeName>
        <fullName>Cell surface glycoprotein MAC-1 subunit alpha</fullName>
    </alternativeName>
    <alternativeName>
        <fullName>Leukocyte adhesion receptor MO1</fullName>
    </alternativeName>
    <cdAntigenName>CD11b</cdAntigenName>
</protein>
<accession>P05555</accession>
<accession>Q8CA73</accession>
<keyword id="KW-0002">3D-structure</keyword>
<keyword id="KW-0025">Alternative splicing</keyword>
<keyword id="KW-0106">Calcium</keyword>
<keyword id="KW-0130">Cell adhesion</keyword>
<keyword id="KW-1003">Cell membrane</keyword>
<keyword id="KW-0903">Direct protein sequencing</keyword>
<keyword id="KW-1015">Disulfide bond</keyword>
<keyword id="KW-0325">Glycoprotein</keyword>
<keyword id="KW-0401">Integrin</keyword>
<keyword id="KW-0472">Membrane</keyword>
<keyword id="KW-0479">Metal-binding</keyword>
<keyword id="KW-0675">Receptor</keyword>
<keyword id="KW-1185">Reference proteome</keyword>
<keyword id="KW-0677">Repeat</keyword>
<keyword id="KW-0732">Signal</keyword>
<keyword id="KW-0812">Transmembrane</keyword>
<keyword id="KW-1133">Transmembrane helix</keyword>
<proteinExistence type="evidence at protein level"/>
<feature type="signal peptide" evidence="8">
    <location>
        <begin position="1"/>
        <end position="16"/>
    </location>
</feature>
<feature type="chain" id="PRO_0000016290" description="Integrin alpha-M">
    <location>
        <begin position="17"/>
        <end position="1153"/>
    </location>
</feature>
<feature type="topological domain" description="Extracellular" evidence="4">
    <location>
        <begin position="17"/>
        <end position="1105"/>
    </location>
</feature>
<feature type="transmembrane region" description="Helical" evidence="4">
    <location>
        <begin position="1106"/>
        <end position="1129"/>
    </location>
</feature>
<feature type="topological domain" description="Cytoplasmic" evidence="4">
    <location>
        <begin position="1130"/>
        <end position="1153"/>
    </location>
</feature>
<feature type="repeat" description="FG-GAP 1" evidence="6">
    <location>
        <begin position="18"/>
        <end position="75"/>
    </location>
</feature>
<feature type="repeat" description="FG-GAP 2" evidence="6">
    <location>
        <begin position="76"/>
        <end position="135"/>
    </location>
</feature>
<feature type="domain" description="VWFA" evidence="5">
    <location>
        <begin position="164"/>
        <end position="338"/>
    </location>
</feature>
<feature type="repeat" description="FG-GAP 3" evidence="6">
    <location>
        <begin position="339"/>
        <end position="390"/>
    </location>
</feature>
<feature type="repeat" description="FG-GAP 4" evidence="6">
    <location>
        <begin position="391"/>
        <end position="442"/>
    </location>
</feature>
<feature type="repeat" description="FG-GAP 5" evidence="6">
    <location>
        <begin position="443"/>
        <end position="503"/>
    </location>
</feature>
<feature type="repeat" description="FG-GAP 6" evidence="6">
    <location>
        <begin position="506"/>
        <end position="564"/>
    </location>
</feature>
<feature type="repeat" description="FG-GAP 7" evidence="6">
    <location>
        <begin position="569"/>
        <end position="629"/>
    </location>
</feature>
<feature type="short sequence motif" description="GFFKR motif">
    <location>
        <begin position="1132"/>
        <end position="1136"/>
    </location>
</feature>
<feature type="binding site" evidence="2">
    <location>
        <position position="465"/>
    </location>
    <ligand>
        <name>Ca(2+)</name>
        <dbReference type="ChEBI" id="CHEBI:29108"/>
        <label>1</label>
    </ligand>
</feature>
<feature type="binding site" evidence="2">
    <location>
        <position position="467"/>
    </location>
    <ligand>
        <name>Ca(2+)</name>
        <dbReference type="ChEBI" id="CHEBI:29108"/>
        <label>1</label>
    </ligand>
</feature>
<feature type="binding site" evidence="2">
    <location>
        <position position="469"/>
    </location>
    <ligand>
        <name>Ca(2+)</name>
        <dbReference type="ChEBI" id="CHEBI:29108"/>
        <label>1</label>
    </ligand>
</feature>
<feature type="binding site" evidence="2">
    <location>
        <position position="471"/>
    </location>
    <ligand>
        <name>Ca(2+)</name>
        <dbReference type="ChEBI" id="CHEBI:29108"/>
        <label>1</label>
    </ligand>
</feature>
<feature type="binding site" evidence="2">
    <location>
        <position position="473"/>
    </location>
    <ligand>
        <name>Ca(2+)</name>
        <dbReference type="ChEBI" id="CHEBI:29108"/>
        <label>1</label>
    </ligand>
</feature>
<feature type="binding site" evidence="2">
    <location>
        <position position="529"/>
    </location>
    <ligand>
        <name>Ca(2+)</name>
        <dbReference type="ChEBI" id="CHEBI:29108"/>
        <label>2</label>
    </ligand>
</feature>
<feature type="binding site" evidence="2">
    <location>
        <position position="531"/>
    </location>
    <ligand>
        <name>Ca(2+)</name>
        <dbReference type="ChEBI" id="CHEBI:29108"/>
        <label>2</label>
    </ligand>
</feature>
<feature type="binding site" evidence="2">
    <location>
        <position position="533"/>
    </location>
    <ligand>
        <name>Ca(2+)</name>
        <dbReference type="ChEBI" id="CHEBI:29108"/>
        <label>2</label>
    </ligand>
</feature>
<feature type="binding site" evidence="2">
    <location>
        <position position="537"/>
    </location>
    <ligand>
        <name>Ca(2+)</name>
        <dbReference type="ChEBI" id="CHEBI:29108"/>
        <label>2</label>
    </ligand>
</feature>
<feature type="binding site" evidence="2">
    <location>
        <position position="592"/>
    </location>
    <ligand>
        <name>Ca(2+)</name>
        <dbReference type="ChEBI" id="CHEBI:29108"/>
        <label>3</label>
    </ligand>
</feature>
<feature type="binding site" evidence="2">
    <location>
        <position position="596"/>
    </location>
    <ligand>
        <name>Ca(2+)</name>
        <dbReference type="ChEBI" id="CHEBI:29108"/>
        <label>3</label>
    </ligand>
</feature>
<feature type="binding site" evidence="2">
    <location>
        <position position="600"/>
    </location>
    <ligand>
        <name>Ca(2+)</name>
        <dbReference type="ChEBI" id="CHEBI:29108"/>
        <label>3</label>
    </ligand>
</feature>
<feature type="glycosylation site" description="N-linked (GlcNAc...) asparagine" evidence="4">
    <location>
        <position position="58"/>
    </location>
</feature>
<feature type="glycosylation site" description="N-linked (GlcNAc...) asparagine" evidence="4">
    <location>
        <position position="86"/>
    </location>
</feature>
<feature type="glycosylation site" description="N-linked (GlcNAc...) asparagine" evidence="4">
    <location>
        <position position="391"/>
    </location>
</feature>
<feature type="glycosylation site" description="N-linked (GlcNAc...) asparagine" evidence="4">
    <location>
        <position position="696"/>
    </location>
</feature>
<feature type="glycosylation site" description="N-linked (GlcNAc...) asparagine" evidence="4">
    <location>
        <position position="734"/>
    </location>
</feature>
<feature type="glycosylation site" description="N-linked (GlcNAc...) asparagine" evidence="4">
    <location>
        <position position="772"/>
    </location>
</feature>
<feature type="glycosylation site" description="N-linked (GlcNAc...) asparagine" evidence="4">
    <location>
        <position position="801"/>
    </location>
</feature>
<feature type="glycosylation site" description="N-linked (GlcNAc...) asparagine" evidence="4">
    <location>
        <position position="881"/>
    </location>
</feature>
<feature type="glycosylation site" description="N-linked (GlcNAc...) asparagine" evidence="4">
    <location>
        <position position="907"/>
    </location>
</feature>
<feature type="glycosylation site" description="N-linked (GlcNAc...) asparagine" evidence="4">
    <location>
        <position position="941"/>
    </location>
</feature>
<feature type="glycosylation site" description="N-linked (GlcNAc...) asparagine" evidence="4">
    <location>
        <position position="980"/>
    </location>
</feature>
<feature type="glycosylation site" description="N-linked (GlcNAc...) asparagine" evidence="4">
    <location>
        <position position="994"/>
    </location>
</feature>
<feature type="glycosylation site" description="N-linked (GlcNAc...) asparagine" evidence="4">
    <location>
        <position position="1022"/>
    </location>
</feature>
<feature type="glycosylation site" description="N-linked (GlcNAc...) asparagine" evidence="4">
    <location>
        <position position="1045"/>
    </location>
</feature>
<feature type="glycosylation site" description="N-linked (GlcNAc...) asparagine" evidence="4">
    <location>
        <position position="1051"/>
    </location>
</feature>
<feature type="glycosylation site" description="N-linked (GlcNAc...) asparagine" evidence="4">
    <location>
        <position position="1076"/>
    </location>
</feature>
<feature type="disulfide bond" evidence="1">
    <location>
        <begin position="66"/>
        <end position="73"/>
    </location>
</feature>
<feature type="disulfide bond" evidence="1">
    <location>
        <begin position="105"/>
        <end position="123"/>
    </location>
</feature>
<feature type="disulfide bond" evidence="1">
    <location>
        <begin position="654"/>
        <end position="711"/>
    </location>
</feature>
<feature type="disulfide bond" evidence="1">
    <location>
        <begin position="770"/>
        <end position="776"/>
    </location>
</feature>
<feature type="disulfide bond" evidence="1">
    <location>
        <begin position="999"/>
        <end position="1023"/>
    </location>
</feature>
<feature type="disulfide bond" evidence="1">
    <location>
        <begin position="1028"/>
        <end position="1033"/>
    </location>
</feature>
<feature type="splice variant" id="VSP_010473" description="In isoform 2." evidence="13">
    <location>
        <begin position="453"/>
        <end position="569"/>
    </location>
</feature>
<feature type="sequence conflict" description="In Ref. 2; BAC30350." evidence="14" ref="2">
    <original>N</original>
    <variation>S</variation>
    <location>
        <position position="37"/>
    </location>
</feature>
<feature type="sequence conflict" description="In Ref. 2; BAC30350." evidence="14" ref="2">
    <original>V</original>
    <variation>G</variation>
    <location>
        <position position="683"/>
    </location>
</feature>
<feature type="strand" evidence="15">
    <location>
        <begin position="149"/>
        <end position="156"/>
    </location>
</feature>
<feature type="helix" evidence="15">
    <location>
        <begin position="163"/>
        <end position="179"/>
    </location>
</feature>
<feature type="turn" evidence="15">
    <location>
        <begin position="180"/>
        <end position="182"/>
    </location>
</feature>
<feature type="strand" evidence="15">
    <location>
        <begin position="186"/>
        <end position="200"/>
    </location>
</feature>
<feature type="helix" evidence="15">
    <location>
        <begin position="202"/>
        <end position="207"/>
    </location>
</feature>
<feature type="helix" evidence="15">
    <location>
        <begin position="211"/>
        <end position="215"/>
    </location>
</feature>
<feature type="helix" evidence="15">
    <location>
        <begin position="227"/>
        <end position="236"/>
    </location>
</feature>
<feature type="turn" evidence="15">
    <location>
        <begin position="237"/>
        <end position="239"/>
    </location>
</feature>
<feature type="helix" evidence="15">
    <location>
        <begin position="241"/>
        <end position="243"/>
    </location>
</feature>
<feature type="strand" evidence="15">
    <location>
        <begin position="249"/>
        <end position="257"/>
    </location>
</feature>
<feature type="helix" evidence="15">
    <location>
        <begin position="268"/>
        <end position="277"/>
    </location>
</feature>
<feature type="strand" evidence="15">
    <location>
        <begin position="280"/>
        <end position="286"/>
    </location>
</feature>
<feature type="turn" evidence="15">
    <location>
        <begin position="288"/>
        <end position="292"/>
    </location>
</feature>
<feature type="helix" evidence="15">
    <location>
        <begin position="294"/>
        <end position="303"/>
    </location>
</feature>
<feature type="helix" evidence="15">
    <location>
        <begin position="308"/>
        <end position="310"/>
    </location>
</feature>
<feature type="strand" evidence="15">
    <location>
        <begin position="312"/>
        <end position="315"/>
    </location>
</feature>
<reference key="1">
    <citation type="journal article" date="1988" name="EMBO J.">
        <title>Amino acid sequence of the murine Mac-1 alpha chain reveals homology with the integrin family and an additional domain related to von Willebrand factor.</title>
        <authorList>
            <person name="Pytela R."/>
        </authorList>
    </citation>
    <scope>NUCLEOTIDE SEQUENCE [MRNA] (ISOFORM 1)</scope>
</reference>
<reference key="2">
    <citation type="journal article" date="2005" name="Science">
        <title>The transcriptional landscape of the mammalian genome.</title>
        <authorList>
            <person name="Carninci P."/>
            <person name="Kasukawa T."/>
            <person name="Katayama S."/>
            <person name="Gough J."/>
            <person name="Frith M.C."/>
            <person name="Maeda N."/>
            <person name="Oyama R."/>
            <person name="Ravasi T."/>
            <person name="Lenhard B."/>
            <person name="Wells C."/>
            <person name="Kodzius R."/>
            <person name="Shimokawa K."/>
            <person name="Bajic V.B."/>
            <person name="Brenner S.E."/>
            <person name="Batalov S."/>
            <person name="Forrest A.R."/>
            <person name="Zavolan M."/>
            <person name="Davis M.J."/>
            <person name="Wilming L.G."/>
            <person name="Aidinis V."/>
            <person name="Allen J.E."/>
            <person name="Ambesi-Impiombato A."/>
            <person name="Apweiler R."/>
            <person name="Aturaliya R.N."/>
            <person name="Bailey T.L."/>
            <person name="Bansal M."/>
            <person name="Baxter L."/>
            <person name="Beisel K.W."/>
            <person name="Bersano T."/>
            <person name="Bono H."/>
            <person name="Chalk A.M."/>
            <person name="Chiu K.P."/>
            <person name="Choudhary V."/>
            <person name="Christoffels A."/>
            <person name="Clutterbuck D.R."/>
            <person name="Crowe M.L."/>
            <person name="Dalla E."/>
            <person name="Dalrymple B.P."/>
            <person name="de Bono B."/>
            <person name="Della Gatta G."/>
            <person name="di Bernardo D."/>
            <person name="Down T."/>
            <person name="Engstrom P."/>
            <person name="Fagiolini M."/>
            <person name="Faulkner G."/>
            <person name="Fletcher C.F."/>
            <person name="Fukushima T."/>
            <person name="Furuno M."/>
            <person name="Futaki S."/>
            <person name="Gariboldi M."/>
            <person name="Georgii-Hemming P."/>
            <person name="Gingeras T.R."/>
            <person name="Gojobori T."/>
            <person name="Green R.E."/>
            <person name="Gustincich S."/>
            <person name="Harbers M."/>
            <person name="Hayashi Y."/>
            <person name="Hensch T.K."/>
            <person name="Hirokawa N."/>
            <person name="Hill D."/>
            <person name="Huminiecki L."/>
            <person name="Iacono M."/>
            <person name="Ikeo K."/>
            <person name="Iwama A."/>
            <person name="Ishikawa T."/>
            <person name="Jakt M."/>
            <person name="Kanapin A."/>
            <person name="Katoh M."/>
            <person name="Kawasawa Y."/>
            <person name="Kelso J."/>
            <person name="Kitamura H."/>
            <person name="Kitano H."/>
            <person name="Kollias G."/>
            <person name="Krishnan S.P."/>
            <person name="Kruger A."/>
            <person name="Kummerfeld S.K."/>
            <person name="Kurochkin I.V."/>
            <person name="Lareau L.F."/>
            <person name="Lazarevic D."/>
            <person name="Lipovich L."/>
            <person name="Liu J."/>
            <person name="Liuni S."/>
            <person name="McWilliam S."/>
            <person name="Madan Babu M."/>
            <person name="Madera M."/>
            <person name="Marchionni L."/>
            <person name="Matsuda H."/>
            <person name="Matsuzawa S."/>
            <person name="Miki H."/>
            <person name="Mignone F."/>
            <person name="Miyake S."/>
            <person name="Morris K."/>
            <person name="Mottagui-Tabar S."/>
            <person name="Mulder N."/>
            <person name="Nakano N."/>
            <person name="Nakauchi H."/>
            <person name="Ng P."/>
            <person name="Nilsson R."/>
            <person name="Nishiguchi S."/>
            <person name="Nishikawa S."/>
            <person name="Nori F."/>
            <person name="Ohara O."/>
            <person name="Okazaki Y."/>
            <person name="Orlando V."/>
            <person name="Pang K.C."/>
            <person name="Pavan W.J."/>
            <person name="Pavesi G."/>
            <person name="Pesole G."/>
            <person name="Petrovsky N."/>
            <person name="Piazza S."/>
            <person name="Reed J."/>
            <person name="Reid J.F."/>
            <person name="Ring B.Z."/>
            <person name="Ringwald M."/>
            <person name="Rost B."/>
            <person name="Ruan Y."/>
            <person name="Salzberg S.L."/>
            <person name="Sandelin A."/>
            <person name="Schneider C."/>
            <person name="Schoenbach C."/>
            <person name="Sekiguchi K."/>
            <person name="Semple C.A."/>
            <person name="Seno S."/>
            <person name="Sessa L."/>
            <person name="Sheng Y."/>
            <person name="Shibata Y."/>
            <person name="Shimada H."/>
            <person name="Shimada K."/>
            <person name="Silva D."/>
            <person name="Sinclair B."/>
            <person name="Sperling S."/>
            <person name="Stupka E."/>
            <person name="Sugiura K."/>
            <person name="Sultana R."/>
            <person name="Takenaka Y."/>
            <person name="Taki K."/>
            <person name="Tammoja K."/>
            <person name="Tan S.L."/>
            <person name="Tang S."/>
            <person name="Taylor M.S."/>
            <person name="Tegner J."/>
            <person name="Teichmann S.A."/>
            <person name="Ueda H.R."/>
            <person name="van Nimwegen E."/>
            <person name="Verardo R."/>
            <person name="Wei C.L."/>
            <person name="Yagi K."/>
            <person name="Yamanishi H."/>
            <person name="Zabarovsky E."/>
            <person name="Zhu S."/>
            <person name="Zimmer A."/>
            <person name="Hide W."/>
            <person name="Bult C."/>
            <person name="Grimmond S.M."/>
            <person name="Teasdale R.D."/>
            <person name="Liu E.T."/>
            <person name="Brusic V."/>
            <person name="Quackenbush J."/>
            <person name="Wahlestedt C."/>
            <person name="Mattick J.S."/>
            <person name="Hume D.A."/>
            <person name="Kai C."/>
            <person name="Sasaki D."/>
            <person name="Tomaru Y."/>
            <person name="Fukuda S."/>
            <person name="Kanamori-Katayama M."/>
            <person name="Suzuki M."/>
            <person name="Aoki J."/>
            <person name="Arakawa T."/>
            <person name="Iida J."/>
            <person name="Imamura K."/>
            <person name="Itoh M."/>
            <person name="Kato T."/>
            <person name="Kawaji H."/>
            <person name="Kawagashira N."/>
            <person name="Kawashima T."/>
            <person name="Kojima M."/>
            <person name="Kondo S."/>
            <person name="Konno H."/>
            <person name="Nakano K."/>
            <person name="Ninomiya N."/>
            <person name="Nishio T."/>
            <person name="Okada M."/>
            <person name="Plessy C."/>
            <person name="Shibata K."/>
            <person name="Shiraki T."/>
            <person name="Suzuki S."/>
            <person name="Tagami M."/>
            <person name="Waki K."/>
            <person name="Watahiki A."/>
            <person name="Okamura-Oho Y."/>
            <person name="Suzuki H."/>
            <person name="Kawai J."/>
            <person name="Hayashizaki Y."/>
        </authorList>
    </citation>
    <scope>NUCLEOTIDE SEQUENCE [LARGE SCALE MRNA] (ISOFORM 2)</scope>
    <source>
        <strain>C57BL/6J</strain>
        <tissue>Spinal cord</tissue>
    </source>
</reference>
<reference key="3">
    <citation type="journal article" date="1986" name="Proc. Natl. Acad. Sci. U.S.A.">
        <title>A partial genomic DNA clone for the alpha subunit of the mouse complement receptor type 3 and cellular adhesion molecule Mac-1.</title>
        <authorList>
            <person name="Sastre L."/>
            <person name="Roman J.M."/>
            <person name="Teplow D.B."/>
            <person name="Dreyer W.J."/>
            <person name="Gee C.E."/>
            <person name="Larson R.S."/>
            <person name="Roberts T.M."/>
            <person name="Springer T.A."/>
        </authorList>
    </citation>
    <scope>NUCLEOTIDE SEQUENCE [GENOMIC DNA] OF 11-45</scope>
    <source>
        <strain>BALB/cJ</strain>
        <tissue>Spleen</tissue>
    </source>
</reference>
<reference key="4">
    <citation type="journal article" date="1985" name="Nature">
        <title>Sequence homology of the LFA-1 and Mac-1 leukocyte adhesion glycoproteins and unexpected relation to leukocyte interferon.</title>
        <authorList>
            <person name="Springer T.A."/>
            <person name="Teplow D.B."/>
            <person name="Dreyer W.J."/>
        </authorList>
    </citation>
    <scope>PROTEIN SEQUENCE OF 17-28</scope>
    <scope>TISSUE SPECIFICITY</scope>
</reference>
<reference key="5">
    <citation type="journal article" date="1996" name="Immunity">
        <title>A novel role for the beta 2 integrin CD11b/CD18 in neutrophil apoptosis: a homeostatic mechanism in inflammation.</title>
        <authorList>
            <person name="Coxon A."/>
            <person name="Rieu P."/>
            <person name="Barkalow F.J."/>
            <person name="Askari S."/>
            <person name="Sharpe A.H."/>
            <person name="von Andrian U.H."/>
            <person name="Arnaout M.A."/>
            <person name="Mayadas T.N."/>
        </authorList>
    </citation>
    <scope>FUNCTION</scope>
    <scope>SUBCELLULAR LOCATION</scope>
    <scope>TISSUE SPECIFICITY</scope>
    <scope>DISRUPTION PHENOTYPE</scope>
</reference>
<reference key="6">
    <citation type="journal article" date="1997" name="J. Exp. Med.">
        <title>A role for Mac-1 (CDIIb/CD18) in immune complex-stimulated neutrophil function in vivo: Mac-1 deficiency abrogates sustained Fcgamma receptor-dependent neutrophil adhesion and complement-dependent proteinuria in acute glomerulonephritis.</title>
        <authorList>
            <person name="Tang T."/>
            <person name="Rosenkranz A."/>
            <person name="Assmann K.J."/>
            <person name="Goodman M.J."/>
            <person name="Gutierrez-Ramos J.C."/>
            <person name="Carroll M.C."/>
            <person name="Cotran R.S."/>
            <person name="Mayadas T.N."/>
        </authorList>
    </citation>
    <scope>FUNCTION</scope>
    <scope>DISRUPTION PHENOTYPE</scope>
</reference>
<reference key="7">
    <citation type="journal article" date="1997" name="Proc. Natl. Acad. Sci. U.S.A.">
        <title>A new class of obesity genes encodes leukocyte adhesion receptors.</title>
        <authorList>
            <person name="Dong Z.M."/>
            <person name="Gutierrez-Ramos J.C."/>
            <person name="Coxon A."/>
            <person name="Mayadas T.N."/>
            <person name="Wagner D.D."/>
        </authorList>
    </citation>
    <scope>DISRUPTION PHENOTYPE</scope>
</reference>
<reference key="8">
    <citation type="journal article" date="1998" name="J. Immunol.">
        <title>Impaired mast cell development and innate immunity in Mac-1 (CD11b/CD18, CR3)-deficient mice.</title>
        <authorList>
            <person name="Rosenkranz A.R."/>
            <person name="Coxon A."/>
            <person name="Maurer M."/>
            <person name="Gurish M.F."/>
            <person name="Austen K.F."/>
            <person name="Friend D.S."/>
            <person name="Galli S.J."/>
            <person name="Mayadas T.N."/>
        </authorList>
    </citation>
    <scope>FUNCTION</scope>
    <scope>SUBCELLULAR LOCATION</scope>
    <scope>TISSUE SPECIFICITY</scope>
    <scope>DISRUPTION PHENOTYPE</scope>
</reference>
<reference key="9">
    <citation type="journal article" date="2008" name="J. Neurosci.">
        <title>Developmental neuronal death in hippocampus requires the microglial CD11b integrin and DAP12 immunoreceptor.</title>
        <authorList>
            <person name="Wakselman S."/>
            <person name="Bechade C."/>
            <person name="Roumier A."/>
            <person name="Bernard D."/>
            <person name="Triller A."/>
            <person name="Bessis A."/>
        </authorList>
    </citation>
    <scope>FUNCTION</scope>
    <scope>TISSUE SPECIFICITY</scope>
    <scope>DISRUPTION PHENOTYPE</scope>
</reference>
<reference key="10">
    <citation type="journal article" date="2010" name="Cell">
        <title>A tissue-specific atlas of mouse protein phosphorylation and expression.</title>
        <authorList>
            <person name="Huttlin E.L."/>
            <person name="Jedrychowski M.P."/>
            <person name="Elias J.E."/>
            <person name="Goswami T."/>
            <person name="Rad R."/>
            <person name="Beausoleil S.A."/>
            <person name="Villen J."/>
            <person name="Haas W."/>
            <person name="Sowa M.E."/>
            <person name="Gygi S.P."/>
        </authorList>
    </citation>
    <scope>IDENTIFICATION BY MASS SPECTROMETRY [LARGE SCALE ANALYSIS]</scope>
    <source>
        <tissue>Brain</tissue>
        <tissue>Brown adipose tissue</tissue>
        <tissue>Lung</tissue>
        <tissue>Spleen</tissue>
    </source>
</reference>
<evidence type="ECO:0000250" key="1"/>
<evidence type="ECO:0000250" key="2">
    <source>
        <dbReference type="UniProtKB" id="P08648"/>
    </source>
</evidence>
<evidence type="ECO:0000250" key="3">
    <source>
        <dbReference type="UniProtKB" id="P11215"/>
    </source>
</evidence>
<evidence type="ECO:0000255" key="4"/>
<evidence type="ECO:0000255" key="5">
    <source>
        <dbReference type="PROSITE-ProRule" id="PRU00219"/>
    </source>
</evidence>
<evidence type="ECO:0000255" key="6">
    <source>
        <dbReference type="PROSITE-ProRule" id="PRU00803"/>
    </source>
</evidence>
<evidence type="ECO:0000269" key="7">
    <source>
    </source>
</evidence>
<evidence type="ECO:0000269" key="8">
    <source>
    </source>
</evidence>
<evidence type="ECO:0000269" key="9">
    <source>
    </source>
</evidence>
<evidence type="ECO:0000269" key="10">
    <source>
    </source>
</evidence>
<evidence type="ECO:0000269" key="11">
    <source>
    </source>
</evidence>
<evidence type="ECO:0000269" key="12">
    <source>
    </source>
</evidence>
<evidence type="ECO:0000303" key="13">
    <source>
    </source>
</evidence>
<evidence type="ECO:0000305" key="14"/>
<evidence type="ECO:0007829" key="15">
    <source>
        <dbReference type="PDB" id="6RHV"/>
    </source>
</evidence>
<gene>
    <name type="primary">Itgam</name>
</gene>